<gene>
    <name evidence="1" type="primary">miaA</name>
    <name type="ordered locus">NT01CX_2107</name>
</gene>
<dbReference type="EC" id="2.5.1.75" evidence="1"/>
<dbReference type="EMBL" id="CP000382">
    <property type="protein sequence ID" value="ABK61782.1"/>
    <property type="molecule type" value="Genomic_DNA"/>
</dbReference>
<dbReference type="RefSeq" id="WP_011722180.1">
    <property type="nucleotide sequence ID" value="NC_008593.1"/>
</dbReference>
<dbReference type="SMR" id="A0Q0M8"/>
<dbReference type="STRING" id="386415.NT01CX_2107"/>
<dbReference type="KEGG" id="cno:NT01CX_2107"/>
<dbReference type="eggNOG" id="COG0324">
    <property type="taxonomic scope" value="Bacteria"/>
</dbReference>
<dbReference type="HOGENOM" id="CLU_032616_0_1_9"/>
<dbReference type="Proteomes" id="UP000008220">
    <property type="component" value="Chromosome"/>
</dbReference>
<dbReference type="GO" id="GO:0005524">
    <property type="term" value="F:ATP binding"/>
    <property type="evidence" value="ECO:0007669"/>
    <property type="project" value="UniProtKB-UniRule"/>
</dbReference>
<dbReference type="GO" id="GO:0052381">
    <property type="term" value="F:tRNA dimethylallyltransferase activity"/>
    <property type="evidence" value="ECO:0007669"/>
    <property type="project" value="UniProtKB-UniRule"/>
</dbReference>
<dbReference type="GO" id="GO:0006400">
    <property type="term" value="P:tRNA modification"/>
    <property type="evidence" value="ECO:0007669"/>
    <property type="project" value="TreeGrafter"/>
</dbReference>
<dbReference type="FunFam" id="1.10.20.140:FF:000001">
    <property type="entry name" value="tRNA dimethylallyltransferase"/>
    <property type="match status" value="1"/>
</dbReference>
<dbReference type="Gene3D" id="1.10.20.140">
    <property type="match status" value="1"/>
</dbReference>
<dbReference type="Gene3D" id="3.40.50.300">
    <property type="entry name" value="P-loop containing nucleotide triphosphate hydrolases"/>
    <property type="match status" value="1"/>
</dbReference>
<dbReference type="HAMAP" id="MF_00185">
    <property type="entry name" value="IPP_trans"/>
    <property type="match status" value="1"/>
</dbReference>
<dbReference type="InterPro" id="IPR039657">
    <property type="entry name" value="Dimethylallyltransferase"/>
</dbReference>
<dbReference type="InterPro" id="IPR018022">
    <property type="entry name" value="IPT"/>
</dbReference>
<dbReference type="InterPro" id="IPR027417">
    <property type="entry name" value="P-loop_NTPase"/>
</dbReference>
<dbReference type="NCBIfam" id="TIGR00174">
    <property type="entry name" value="miaA"/>
    <property type="match status" value="1"/>
</dbReference>
<dbReference type="PANTHER" id="PTHR11088">
    <property type="entry name" value="TRNA DIMETHYLALLYLTRANSFERASE"/>
    <property type="match status" value="1"/>
</dbReference>
<dbReference type="PANTHER" id="PTHR11088:SF60">
    <property type="entry name" value="TRNA DIMETHYLALLYLTRANSFERASE"/>
    <property type="match status" value="1"/>
</dbReference>
<dbReference type="Pfam" id="PF01715">
    <property type="entry name" value="IPPT"/>
    <property type="match status" value="1"/>
</dbReference>
<dbReference type="SUPFAM" id="SSF52540">
    <property type="entry name" value="P-loop containing nucleoside triphosphate hydrolases"/>
    <property type="match status" value="2"/>
</dbReference>
<feature type="chain" id="PRO_0000377124" description="tRNA dimethylallyltransferase">
    <location>
        <begin position="1"/>
        <end position="314"/>
    </location>
</feature>
<feature type="region of interest" description="Interaction with substrate tRNA" evidence="1">
    <location>
        <begin position="35"/>
        <end position="38"/>
    </location>
</feature>
<feature type="binding site" evidence="1">
    <location>
        <begin position="10"/>
        <end position="17"/>
    </location>
    <ligand>
        <name>ATP</name>
        <dbReference type="ChEBI" id="CHEBI:30616"/>
    </ligand>
</feature>
<feature type="binding site" evidence="1">
    <location>
        <begin position="12"/>
        <end position="17"/>
    </location>
    <ligand>
        <name>substrate</name>
    </ligand>
</feature>
<feature type="site" description="Interaction with substrate tRNA" evidence="1">
    <location>
        <position position="101"/>
    </location>
</feature>
<feature type="site" description="Interaction with substrate tRNA" evidence="1">
    <location>
        <position position="124"/>
    </location>
</feature>
<evidence type="ECO:0000255" key="1">
    <source>
        <dbReference type="HAMAP-Rule" id="MF_00185"/>
    </source>
</evidence>
<protein>
    <recommendedName>
        <fullName evidence="1">tRNA dimethylallyltransferase</fullName>
        <ecNumber evidence="1">2.5.1.75</ecNumber>
    </recommendedName>
    <alternativeName>
        <fullName evidence="1">Dimethylallyl diphosphate:tRNA dimethylallyltransferase</fullName>
        <shortName evidence="1">DMAPP:tRNA dimethylallyltransferase</shortName>
        <shortName evidence="1">DMATase</shortName>
    </alternativeName>
    <alternativeName>
        <fullName evidence="1">Isopentenyl-diphosphate:tRNA isopentenyltransferase</fullName>
        <shortName evidence="1">IPP transferase</shortName>
        <shortName evidence="1">IPPT</shortName>
        <shortName evidence="1">IPTase</shortName>
    </alternativeName>
</protein>
<organism>
    <name type="scientific">Clostridium novyi (strain NT)</name>
    <dbReference type="NCBI Taxonomy" id="386415"/>
    <lineage>
        <taxon>Bacteria</taxon>
        <taxon>Bacillati</taxon>
        <taxon>Bacillota</taxon>
        <taxon>Clostridia</taxon>
        <taxon>Eubacteriales</taxon>
        <taxon>Clostridiaceae</taxon>
        <taxon>Clostridium</taxon>
    </lineage>
</organism>
<sequence>MKQDLFILAGPTAVGKTDISIKLAQKLNGEIISADSMQIYKHMDIGSAKITEAEKEGIPHHLIDFVSPFDEFSVAEFKEKSKNAIKDIASRGKLPMIVGGTGFYIDSLIFNYDFANTYKDEEYREHLKNLASEHGKEYVHELLKDIDEVSYKKLYPNDLKRVIRALEVFKLTGKTISEFNKEQDIFDIPYNVYYFVLNMDRSKLYERINKRVDIMMEKGLIEEVKSLQNMGCTPDMQSMKGIGYKEILYYLDGKLSLDEAVELIKKGSRHYAKRQLTWFRKDNRVNWIDKDQYKDDTEVCNAIEEKFLNLKNNL</sequence>
<keyword id="KW-0067">ATP-binding</keyword>
<keyword id="KW-0460">Magnesium</keyword>
<keyword id="KW-0547">Nucleotide-binding</keyword>
<keyword id="KW-1185">Reference proteome</keyword>
<keyword id="KW-0808">Transferase</keyword>
<keyword id="KW-0819">tRNA processing</keyword>
<accession>A0Q0M8</accession>
<comment type="function">
    <text evidence="1">Catalyzes the transfer of a dimethylallyl group onto the adenine at position 37 in tRNAs that read codons beginning with uridine, leading to the formation of N6-(dimethylallyl)adenosine (i(6)A).</text>
</comment>
<comment type="catalytic activity">
    <reaction evidence="1">
        <text>adenosine(37) in tRNA + dimethylallyl diphosphate = N(6)-dimethylallyladenosine(37) in tRNA + diphosphate</text>
        <dbReference type="Rhea" id="RHEA:26482"/>
        <dbReference type="Rhea" id="RHEA-COMP:10162"/>
        <dbReference type="Rhea" id="RHEA-COMP:10375"/>
        <dbReference type="ChEBI" id="CHEBI:33019"/>
        <dbReference type="ChEBI" id="CHEBI:57623"/>
        <dbReference type="ChEBI" id="CHEBI:74411"/>
        <dbReference type="ChEBI" id="CHEBI:74415"/>
        <dbReference type="EC" id="2.5.1.75"/>
    </reaction>
</comment>
<comment type="cofactor">
    <cofactor evidence="1">
        <name>Mg(2+)</name>
        <dbReference type="ChEBI" id="CHEBI:18420"/>
    </cofactor>
</comment>
<comment type="subunit">
    <text evidence="1">Monomer.</text>
</comment>
<comment type="similarity">
    <text evidence="1">Belongs to the IPP transferase family.</text>
</comment>
<reference key="1">
    <citation type="journal article" date="2006" name="Nat. Biotechnol.">
        <title>The genome and transcriptomes of the anti-tumor agent Clostridium novyi-NT.</title>
        <authorList>
            <person name="Bettegowda C."/>
            <person name="Huang X."/>
            <person name="Lin J."/>
            <person name="Cheong I."/>
            <person name="Kohli M."/>
            <person name="Szabo S.A."/>
            <person name="Zhang X."/>
            <person name="Diaz L.A. Jr."/>
            <person name="Velculescu V.E."/>
            <person name="Parmigiani G."/>
            <person name="Kinzler K.W."/>
            <person name="Vogelstein B."/>
            <person name="Zhou S."/>
        </authorList>
    </citation>
    <scope>NUCLEOTIDE SEQUENCE [LARGE SCALE GENOMIC DNA]</scope>
    <source>
        <strain>NT</strain>
    </source>
</reference>
<proteinExistence type="inferred from homology"/>
<name>MIAA_CLONN</name>